<name>TX3A_HETMC</name>
<dbReference type="SMR" id="C0HKD0"/>
<dbReference type="GO" id="GO:0005576">
    <property type="term" value="C:extracellular region"/>
    <property type="evidence" value="ECO:0007669"/>
    <property type="project" value="UniProtKB-SubCell"/>
</dbReference>
<dbReference type="GO" id="GO:0099106">
    <property type="term" value="F:ion channel regulator activity"/>
    <property type="evidence" value="ECO:0007669"/>
    <property type="project" value="UniProtKB-KW"/>
</dbReference>
<dbReference type="GO" id="GO:0090729">
    <property type="term" value="F:toxin activity"/>
    <property type="evidence" value="ECO:0007669"/>
    <property type="project" value="UniProtKB-KW"/>
</dbReference>
<dbReference type="Gene3D" id="6.20.10.10">
    <property type="match status" value="1"/>
</dbReference>
<dbReference type="SUPFAM" id="SSF57059">
    <property type="entry name" value="omega toxin-like"/>
    <property type="match status" value="1"/>
</dbReference>
<feature type="peptide" id="PRO_0000439456" description="Pi-theraphotoxin-Hm3a" evidence="2">
    <location>
        <begin position="1"/>
        <end position="37"/>
    </location>
</feature>
<feature type="disulfide bond" evidence="1">
    <location>
        <begin position="3"/>
        <end position="18"/>
    </location>
</feature>
<feature type="disulfide bond" evidence="1">
    <location>
        <begin position="10"/>
        <end position="23"/>
    </location>
</feature>
<feature type="disulfide bond" evidence="1">
    <location>
        <begin position="17"/>
        <end position="33"/>
    </location>
</feature>
<feature type="mutagenesis site" description="3.3-fold increase in ability to inhibit rASIC1a." evidence="2">
    <original>V</original>
    <variation>VP</variation>
    <location>
        <position position="37"/>
    </location>
</feature>
<comment type="function">
    <text evidence="2">This toxin acts on different isoforms of acid-sensing ion channel ASIC1 in a similar manner to psalmotoxin-1 (AC P60514). On ASIC1a homotrimer, it provokes a pH-dependent inhibition (IC(50)=39.7 nM on human and IC(50)=1.3 nM on rat channels), whereas it potentiates ASIC1b homotrimer and ASIC1a-ASIC1b heterotrimer (EC(50)=178.1 nM on human ASIC1b, EC(50)=46.5 nM on rat ASIC1b and EC(50)=17.4 nM on rat ASIC1a-ASIC1b channels). On rat ASIC1a, it acts by inhibiting channel currents by shifting the pH of half-maximal effect (pH(50)) of steady-state desensitization and activation to more alkaline values.</text>
</comment>
<comment type="subcellular location">
    <subcellularLocation>
        <location evidence="2">Secreted</location>
    </subcellularLocation>
</comment>
<comment type="tissue specificity">
    <text evidence="5">Expressed by the venom gland.</text>
</comment>
<comment type="domain">
    <text evidence="4">The presence of a 'disulfide through disulfide knot' structurally defines this protein as a knottin.</text>
</comment>
<comment type="mass spectrometry">
    <text>Monoisotopic mass.</text>
</comment>
<comment type="miscellaneous">
    <text evidence="2">Is more stable than psalmotoxin-1 (AC P60514) when challenged with either high temperature or human serum.</text>
</comment>
<comment type="miscellaneous">
    <text evidence="2">Negative results: does not show activity on Nav1.2/SCN2A, Kv10.1/KCNH1/EAG1 and Kv11.1/KCNH2/ERG1.</text>
</comment>
<comment type="similarity">
    <text evidence="4">Belongs to the psalmotoxin-1 family.</text>
</comment>
<proteinExistence type="evidence at protein level"/>
<keyword id="KW-0903">Direct protein sequencing</keyword>
<keyword id="KW-1015">Disulfide bond</keyword>
<keyword id="KW-0872">Ion channel impairing toxin</keyword>
<keyword id="KW-0960">Knottin</keyword>
<keyword id="KW-0528">Neurotoxin</keyword>
<keyword id="KW-1275">Proton-gated sodium channel impairing toxin</keyword>
<keyword id="KW-0964">Secreted</keyword>
<keyword id="KW-0800">Toxin</keyword>
<protein>
    <recommendedName>
        <fullName evidence="3">Pi-theraphotoxin-Hm3a</fullName>
        <shortName evidence="3">Pi-TRTX-Hm3a</shortName>
    </recommendedName>
</protein>
<evidence type="ECO:0000250" key="1">
    <source>
        <dbReference type="UniProtKB" id="P60514"/>
    </source>
</evidence>
<evidence type="ECO:0000269" key="2">
    <source>
    </source>
</evidence>
<evidence type="ECO:0000303" key="3">
    <source>
    </source>
</evidence>
<evidence type="ECO:0000305" key="4"/>
<evidence type="ECO:0000305" key="5">
    <source>
    </source>
</evidence>
<sequence>EPCIPKWKSCVNRHGDCCAGLECWKRRKSFEVCVPKV</sequence>
<organism>
    <name type="scientific">Heteroscodra maculata</name>
    <name type="common">Togo starburst tarantula</name>
    <name type="synonym">Togo starburst baboon spider</name>
    <dbReference type="NCBI Taxonomy" id="268413"/>
    <lineage>
        <taxon>Eukaryota</taxon>
        <taxon>Metazoa</taxon>
        <taxon>Ecdysozoa</taxon>
        <taxon>Arthropoda</taxon>
        <taxon>Chelicerata</taxon>
        <taxon>Arachnida</taxon>
        <taxon>Araneae</taxon>
        <taxon>Mygalomorphae</taxon>
        <taxon>Theraphosidae</taxon>
        <taxon>Heteroscodra</taxon>
    </lineage>
</organism>
<accession>C0HKD0</accession>
<reference key="1">
    <citation type="journal article" date="2017" name="Neuropharmacology">
        <title>Discovery and molecular interaction studies of a highly stable, tarantula peptide modulator of acid-sensing ion channel 1.</title>
        <authorList>
            <person name="Er S.Y."/>
            <person name="Cristofori-Armstrong B."/>
            <person name="Escoubas P."/>
            <person name="Rash L.D."/>
        </authorList>
    </citation>
    <scope>PROTEIN SEQUENCE</scope>
    <scope>FUNCTION</scope>
    <scope>SUBCELLULAR LOCATION</scope>
    <scope>MASS SPECTROMETRY</scope>
    <scope>MUTAGENESIS OF VAL-37</scope>
    <scope>STABILITY</scope>
    <source>
        <tissue>Venom</tissue>
    </source>
</reference>